<accession>A5D374</accession>
<gene>
    <name evidence="1" type="primary">aroB</name>
    <name type="ordered locus">PTH_1132</name>
</gene>
<keyword id="KW-0028">Amino-acid biosynthesis</keyword>
<keyword id="KW-0057">Aromatic amino acid biosynthesis</keyword>
<keyword id="KW-0170">Cobalt</keyword>
<keyword id="KW-0963">Cytoplasm</keyword>
<keyword id="KW-0456">Lyase</keyword>
<keyword id="KW-0479">Metal-binding</keyword>
<keyword id="KW-0520">NAD</keyword>
<keyword id="KW-0547">Nucleotide-binding</keyword>
<keyword id="KW-1185">Reference proteome</keyword>
<keyword id="KW-0862">Zinc</keyword>
<protein>
    <recommendedName>
        <fullName evidence="1">3-dehydroquinate synthase</fullName>
        <shortName evidence="1">DHQS</shortName>
        <ecNumber evidence="1">4.2.3.4</ecNumber>
    </recommendedName>
</protein>
<sequence>METVNVNLGKRSYPIYAGPGILQDLGELLGGLPVGRKVLLISNPTVFSLYGEKAAESLARAGFTVAVAEIGDGEEHKTLATAGRLYDRAFEAGLDRRSSIVALGGGVVGDVAGFVAATYMRGISFVQVPTTLLAQVDSSVGGKVAVNHPRGKNIIGAFYQPRLVLADVDTLKTLPVRQMRSGLAEVIKYGVIWSREFFAWLEQNIEALLNGEAGALAYAVRESCRIKAQVVEQDETEQGLRAVLNYGHTVGHAVEALTHYRVYTHGEAVGIGMAVEAGLAVALGMLKRSEGGRIIRLIRQAGLPEGLPEGLPPEKTVEKFYHDKKAVEGQLTFVLPERIGRAVVKNGLAKNFLLEFLSAGYGLLERGAGRV</sequence>
<proteinExistence type="inferred from homology"/>
<name>AROB_PELTS</name>
<feature type="chain" id="PRO_1000202917" description="3-dehydroquinate synthase">
    <location>
        <begin position="1"/>
        <end position="371"/>
    </location>
</feature>
<feature type="binding site" evidence="1">
    <location>
        <begin position="72"/>
        <end position="77"/>
    </location>
    <ligand>
        <name>NAD(+)</name>
        <dbReference type="ChEBI" id="CHEBI:57540"/>
    </ligand>
</feature>
<feature type="binding site" evidence="1">
    <location>
        <begin position="106"/>
        <end position="110"/>
    </location>
    <ligand>
        <name>NAD(+)</name>
        <dbReference type="ChEBI" id="CHEBI:57540"/>
    </ligand>
</feature>
<feature type="binding site" evidence="1">
    <location>
        <begin position="130"/>
        <end position="131"/>
    </location>
    <ligand>
        <name>NAD(+)</name>
        <dbReference type="ChEBI" id="CHEBI:57540"/>
    </ligand>
</feature>
<feature type="binding site" evidence="1">
    <location>
        <position position="143"/>
    </location>
    <ligand>
        <name>NAD(+)</name>
        <dbReference type="ChEBI" id="CHEBI:57540"/>
    </ligand>
</feature>
<feature type="binding site" evidence="1">
    <location>
        <position position="152"/>
    </location>
    <ligand>
        <name>NAD(+)</name>
        <dbReference type="ChEBI" id="CHEBI:57540"/>
    </ligand>
</feature>
<feature type="binding site" evidence="1">
    <location>
        <begin position="170"/>
        <end position="173"/>
    </location>
    <ligand>
        <name>NAD(+)</name>
        <dbReference type="ChEBI" id="CHEBI:57540"/>
    </ligand>
</feature>
<feature type="binding site" evidence="1">
    <location>
        <position position="185"/>
    </location>
    <ligand>
        <name>Zn(2+)</name>
        <dbReference type="ChEBI" id="CHEBI:29105"/>
    </ligand>
</feature>
<feature type="binding site" evidence="1">
    <location>
        <position position="248"/>
    </location>
    <ligand>
        <name>Zn(2+)</name>
        <dbReference type="ChEBI" id="CHEBI:29105"/>
    </ligand>
</feature>
<feature type="binding site" evidence="1">
    <location>
        <position position="265"/>
    </location>
    <ligand>
        <name>Zn(2+)</name>
        <dbReference type="ChEBI" id="CHEBI:29105"/>
    </ligand>
</feature>
<organism>
    <name type="scientific">Pelotomaculum thermopropionicum (strain DSM 13744 / JCM 10971 / SI)</name>
    <dbReference type="NCBI Taxonomy" id="370438"/>
    <lineage>
        <taxon>Bacteria</taxon>
        <taxon>Bacillati</taxon>
        <taxon>Bacillota</taxon>
        <taxon>Clostridia</taxon>
        <taxon>Eubacteriales</taxon>
        <taxon>Desulfotomaculaceae</taxon>
        <taxon>Pelotomaculum</taxon>
    </lineage>
</organism>
<comment type="function">
    <text evidence="1">Catalyzes the conversion of 3-deoxy-D-arabino-heptulosonate 7-phosphate (DAHP) to dehydroquinate (DHQ).</text>
</comment>
<comment type="catalytic activity">
    <reaction evidence="1">
        <text>7-phospho-2-dehydro-3-deoxy-D-arabino-heptonate = 3-dehydroquinate + phosphate</text>
        <dbReference type="Rhea" id="RHEA:21968"/>
        <dbReference type="ChEBI" id="CHEBI:32364"/>
        <dbReference type="ChEBI" id="CHEBI:43474"/>
        <dbReference type="ChEBI" id="CHEBI:58394"/>
        <dbReference type="EC" id="4.2.3.4"/>
    </reaction>
</comment>
<comment type="cofactor">
    <cofactor evidence="1">
        <name>Co(2+)</name>
        <dbReference type="ChEBI" id="CHEBI:48828"/>
    </cofactor>
    <cofactor evidence="1">
        <name>Zn(2+)</name>
        <dbReference type="ChEBI" id="CHEBI:29105"/>
    </cofactor>
    <text evidence="1">Binds 1 divalent metal cation per subunit. Can use either Co(2+) or Zn(2+).</text>
</comment>
<comment type="cofactor">
    <cofactor evidence="1">
        <name>NAD(+)</name>
        <dbReference type="ChEBI" id="CHEBI:57540"/>
    </cofactor>
</comment>
<comment type="pathway">
    <text evidence="1">Metabolic intermediate biosynthesis; chorismate biosynthesis; chorismate from D-erythrose 4-phosphate and phosphoenolpyruvate: step 2/7.</text>
</comment>
<comment type="subcellular location">
    <subcellularLocation>
        <location evidence="1">Cytoplasm</location>
    </subcellularLocation>
</comment>
<comment type="similarity">
    <text evidence="1">Belongs to the sugar phosphate cyclases superfamily. Dehydroquinate synthase family.</text>
</comment>
<dbReference type="EC" id="4.2.3.4" evidence="1"/>
<dbReference type="EMBL" id="AP009389">
    <property type="protein sequence ID" value="BAF59313.1"/>
    <property type="molecule type" value="Genomic_DNA"/>
</dbReference>
<dbReference type="SMR" id="A5D374"/>
<dbReference type="STRING" id="370438.PTH_1132"/>
<dbReference type="KEGG" id="pth:PTH_1132"/>
<dbReference type="eggNOG" id="COG0337">
    <property type="taxonomic scope" value="Bacteria"/>
</dbReference>
<dbReference type="HOGENOM" id="CLU_001201_0_2_9"/>
<dbReference type="UniPathway" id="UPA00053">
    <property type="reaction ID" value="UER00085"/>
</dbReference>
<dbReference type="Proteomes" id="UP000006556">
    <property type="component" value="Chromosome"/>
</dbReference>
<dbReference type="GO" id="GO:0005737">
    <property type="term" value="C:cytoplasm"/>
    <property type="evidence" value="ECO:0007669"/>
    <property type="project" value="UniProtKB-SubCell"/>
</dbReference>
<dbReference type="GO" id="GO:0003856">
    <property type="term" value="F:3-dehydroquinate synthase activity"/>
    <property type="evidence" value="ECO:0007669"/>
    <property type="project" value="UniProtKB-UniRule"/>
</dbReference>
<dbReference type="GO" id="GO:0046872">
    <property type="term" value="F:metal ion binding"/>
    <property type="evidence" value="ECO:0007669"/>
    <property type="project" value="UniProtKB-KW"/>
</dbReference>
<dbReference type="GO" id="GO:0000166">
    <property type="term" value="F:nucleotide binding"/>
    <property type="evidence" value="ECO:0007669"/>
    <property type="project" value="UniProtKB-KW"/>
</dbReference>
<dbReference type="GO" id="GO:0008652">
    <property type="term" value="P:amino acid biosynthetic process"/>
    <property type="evidence" value="ECO:0007669"/>
    <property type="project" value="UniProtKB-KW"/>
</dbReference>
<dbReference type="GO" id="GO:0009073">
    <property type="term" value="P:aromatic amino acid family biosynthetic process"/>
    <property type="evidence" value="ECO:0007669"/>
    <property type="project" value="UniProtKB-KW"/>
</dbReference>
<dbReference type="GO" id="GO:0009423">
    <property type="term" value="P:chorismate biosynthetic process"/>
    <property type="evidence" value="ECO:0007669"/>
    <property type="project" value="UniProtKB-UniRule"/>
</dbReference>
<dbReference type="CDD" id="cd08195">
    <property type="entry name" value="DHQS"/>
    <property type="match status" value="1"/>
</dbReference>
<dbReference type="FunFam" id="3.40.50.1970:FF:000001">
    <property type="entry name" value="3-dehydroquinate synthase"/>
    <property type="match status" value="1"/>
</dbReference>
<dbReference type="Gene3D" id="3.40.50.1970">
    <property type="match status" value="1"/>
</dbReference>
<dbReference type="Gene3D" id="1.20.1090.10">
    <property type="entry name" value="Dehydroquinate synthase-like - alpha domain"/>
    <property type="match status" value="1"/>
</dbReference>
<dbReference type="HAMAP" id="MF_00110">
    <property type="entry name" value="DHQ_synthase"/>
    <property type="match status" value="1"/>
</dbReference>
<dbReference type="InterPro" id="IPR050071">
    <property type="entry name" value="Dehydroquinate_synthase"/>
</dbReference>
<dbReference type="InterPro" id="IPR016037">
    <property type="entry name" value="DHQ_synth_AroB"/>
</dbReference>
<dbReference type="InterPro" id="IPR030963">
    <property type="entry name" value="DHQ_synth_fam"/>
</dbReference>
<dbReference type="InterPro" id="IPR030960">
    <property type="entry name" value="DHQS/DOIS_N"/>
</dbReference>
<dbReference type="InterPro" id="IPR056179">
    <property type="entry name" value="DHQS_C"/>
</dbReference>
<dbReference type="NCBIfam" id="TIGR01357">
    <property type="entry name" value="aroB"/>
    <property type="match status" value="1"/>
</dbReference>
<dbReference type="PANTHER" id="PTHR43622">
    <property type="entry name" value="3-DEHYDROQUINATE SYNTHASE"/>
    <property type="match status" value="1"/>
</dbReference>
<dbReference type="PANTHER" id="PTHR43622:SF7">
    <property type="entry name" value="3-DEHYDROQUINATE SYNTHASE, CHLOROPLASTIC"/>
    <property type="match status" value="1"/>
</dbReference>
<dbReference type="Pfam" id="PF01761">
    <property type="entry name" value="DHQ_synthase"/>
    <property type="match status" value="1"/>
</dbReference>
<dbReference type="Pfam" id="PF24621">
    <property type="entry name" value="DHQS_C"/>
    <property type="match status" value="1"/>
</dbReference>
<dbReference type="PIRSF" id="PIRSF001455">
    <property type="entry name" value="DHQ_synth"/>
    <property type="match status" value="1"/>
</dbReference>
<dbReference type="SUPFAM" id="SSF56796">
    <property type="entry name" value="Dehydroquinate synthase-like"/>
    <property type="match status" value="1"/>
</dbReference>
<reference key="1">
    <citation type="journal article" date="2008" name="Genome Res.">
        <title>The genome of Pelotomaculum thermopropionicum reveals niche-associated evolution in anaerobic microbiota.</title>
        <authorList>
            <person name="Kosaka T."/>
            <person name="Kato S."/>
            <person name="Shimoyama T."/>
            <person name="Ishii S."/>
            <person name="Abe T."/>
            <person name="Watanabe K."/>
        </authorList>
    </citation>
    <scope>NUCLEOTIDE SEQUENCE [LARGE SCALE GENOMIC DNA]</scope>
    <source>
        <strain>DSM 13744 / JCM 10971 / SI</strain>
    </source>
</reference>
<evidence type="ECO:0000255" key="1">
    <source>
        <dbReference type="HAMAP-Rule" id="MF_00110"/>
    </source>
</evidence>